<organismHost>
    <name type="scientific">Escherichia coli C</name>
    <dbReference type="NCBI Taxonomy" id="498388"/>
</organismHost>
<comment type="function">
    <text>Plays an essential role in viral DNA replication. Binds the origin of replication and cleaves the dsDNA replicative form I (RFI) and becomes covalently bound to it via phosphotyrosine bond, generating the dsDNA replicative form II (RFII). In turn, viral DNA replication initiates in the presence of host Rep and DNA polymerase III at the 3'-OH of the cleavage site. After one round of rolling circle synthesis, protein A is linked to the newly synthesized ssDNA and joins the ends of the displaced strand to generate a circular single-stranded molecule ready to be packed into a virion.</text>
</comment>
<comment type="function">
    <text>The A* protein binds to double-stranded DNA and prevents hydrolysis by nucleases. Additionally, A* is an inhibitor of DNA replication and may have a role in the transition from semiconservative replicative form DNA replication to single-stranded DNA synthesis in the life cycle.</text>
</comment>
<comment type="catalytic activity">
    <reaction>
        <text>ATP + (deoxyribonucleotide)n-3'-hydroxyl + 5'-phospho-(deoxyribonucleotide)m = (deoxyribonucleotide)n+m + AMP + diphosphate.</text>
        <dbReference type="EC" id="6.5.1.1"/>
    </reaction>
</comment>
<comment type="alternative products">
    <event type="alternative initiation"/>
    <isoform>
        <id>P03631-1</id>
        <name>A</name>
        <sequence type="displayed"/>
    </isoform>
    <isoform>
        <id>P03631-2</id>
        <name>A*</name>
        <sequence type="described" ref="VSP_018674"/>
    </isoform>
</comment>
<comment type="similarity">
    <text evidence="4">Belongs to the microviridae Rep protein family.</text>
</comment>
<comment type="sequence caution" evidence="4">
    <conflict type="erroneous initiation">
        <sequence resource="EMBL-CDS" id="AAA32571"/>
    </conflict>
</comment>
<sequence>MVRSYYPSECHADYFDFERIEALKPAIEACGISTLSQSPMLGFHKQMDNRIKLLEEILSFRMQGVEFDNGDMYVDGHKAASDVRDEFVSVTEKLMDELAQCYNVLPQLDINNTIDHRPEGDEKWFLENEKTVTQFCRKLAAERPLKDIRDEYNYPKKKGIKDECSRLLEASTMKSRRGFAIQRLMNAMRQAHADGWFIVFDTLTLADDRLEAFYDNPNALRDYFRDIGRMVLAAEGRKANDSHADCYQYFCVPEYGTANGRLHFHAVHFMRTLPTGSVDPNFGRRVRNRRQLNSLQNTWPYGYSMPIAVRYTQDAFSRSGWLWPVDAKGEPLKATSYMAVGFYVAKYVNKKSDMDLAAKGLGAKEWNNSLKTKLSLLPKKLFRIRMSRNFGMKMLTMTNLSTECLIQLTKLGYDATPFNQILKQNAKREMRLRLGKVTVADVLAAQPVTTNLLKFMRASIKMIGVSNLQSFIASMTQKLTLSDISDESKNYLDKAGITTACLRIKSKWTAGGK</sequence>
<evidence type="ECO:0000255" key="1"/>
<evidence type="ECO:0000269" key="2">
    <source>
    </source>
</evidence>
<evidence type="ECO:0000269" key="3">
    <source>
    </source>
</evidence>
<evidence type="ECO:0000305" key="4"/>
<organism>
    <name type="scientific">Enterobacteria phage phiX174</name>
    <name type="common">Isolate Sanger</name>
    <name type="synonym">Bacteriophage phi-X174</name>
    <dbReference type="NCBI Taxonomy" id="1217068"/>
    <lineage>
        <taxon>Viruses</taxon>
        <taxon>Monodnaviria</taxon>
        <taxon>Sangervirae</taxon>
        <taxon>Phixviricota</taxon>
        <taxon>Malgrandaviricetes</taxon>
        <taxon>Petitvirales</taxon>
        <taxon>Microviridae</taxon>
        <taxon>Bullavirinae</taxon>
        <taxon>Sinsheimervirus</taxon>
        <taxon>Escherichia phage phiX174</taxon>
    </lineage>
</organism>
<gene>
    <name type="primary">A</name>
</gene>
<protein>
    <recommendedName>
        <fullName>Replication-associated protein A</fullName>
        <ecNumber>3.1.21.-</ecNumber>
        <ecNumber>6.5.1.1</ecNumber>
    </recommendedName>
    <alternativeName>
        <fullName>RepA</fullName>
    </alternativeName>
</protein>
<reference key="1">
    <citation type="journal article" date="1977" name="Nature">
        <title>Nucleotide sequence of bacteriophage phi X174 DNA.</title>
        <authorList>
            <person name="Sanger F."/>
            <person name="Air G.M."/>
            <person name="Barrell B.G."/>
            <person name="Brown N.L."/>
            <person name="Coulson A.R."/>
            <person name="Fiddes J.C."/>
            <person name="Hutchison C.A. III"/>
            <person name="Slocombe P.M."/>
            <person name="Smith M."/>
        </authorList>
    </citation>
    <scope>NUCLEOTIDE SEQUENCE [GENOMIC DNA]</scope>
</reference>
<reference key="2">
    <citation type="journal article" date="1978" name="J. Mol. Biol.">
        <title>The nucleotide sequence of bacteriophage phiX174.</title>
        <authorList>
            <person name="Sanger F."/>
            <person name="Coulson A.R."/>
            <person name="Friedmann T."/>
            <person name="Air G.M."/>
            <person name="Barrell B.G."/>
            <person name="Brown N.L."/>
            <person name="Fiddes J.C."/>
            <person name="Hutchison C.A. III"/>
            <person name="Slocombe P.M."/>
            <person name="Smith M."/>
        </authorList>
    </citation>
    <scope>SEQUENCE REVISION</scope>
</reference>
<reference key="3">
    <citation type="journal article" date="1979" name="J. Biol. Chem.">
        <title>Role of polymeric forms of the bacteriophage phi X174 coded gene A protein in phi XRFI DNA cleavage.</title>
        <authorList>
            <person name="Ikeda J."/>
            <person name="Yudelevich A."/>
            <person name="Shimamoto N."/>
            <person name="Hurwitz J."/>
        </authorList>
    </citation>
    <scope>FUNCTION OF A AND A*</scope>
</reference>
<reference key="4">
    <citation type="journal article" date="1981" name="Nucleic Acids Res.">
        <title>The A* protein of phi X174 is an inhibitor of DNA replication.</title>
        <authorList>
            <person name="Eisenberg S."/>
            <person name="Ascarelli R."/>
        </authorList>
    </citation>
    <scope>FUNCTION OF A*</scope>
</reference>
<reference key="5">
    <citation type="journal article" date="1986" name="Nucleic Acids Res.">
        <title>Two juxtaposed tyrosyl-OH groups participate in phi X174 gene A protein catalysed cleavage and ligation of DNA.</title>
        <authorList>
            <person name="van Mansfield A.D.M."/>
            <person name="van Teeffelen H.A.A.M."/>
            <person name="Baas P.D."/>
            <person name="Jansz H.S."/>
        </authorList>
    </citation>
    <scope>ACTIVE SITES TYR-343 AND TYR-347</scope>
</reference>
<reference key="6">
    <citation type="journal article" date="1993" name="J. Biol. Chem.">
        <title>The mechanism of sequence-specific DNA cleavage and strand transfer by phi X174 gene A* protein.</title>
        <authorList>
            <person name="Hanai R."/>
            <person name="Wang J.C."/>
        </authorList>
    </citation>
    <scope>FUNCTION</scope>
    <scope>MUTAGENESIS OF TYR-343 AND TYR-347</scope>
</reference>
<dbReference type="EC" id="3.1.21.-"/>
<dbReference type="EC" id="6.5.1.1"/>
<dbReference type="EMBL" id="J02482">
    <property type="protein sequence ID" value="AAA32570.1"/>
    <property type="molecule type" value="Genomic_DNA"/>
</dbReference>
<dbReference type="EMBL" id="J02482">
    <property type="protein sequence ID" value="AAA32571.1"/>
    <property type="status" value="ALT_INIT"/>
    <property type="molecule type" value="Genomic_DNA"/>
</dbReference>
<dbReference type="PIR" id="A04239">
    <property type="entry name" value="ZABPF4"/>
</dbReference>
<dbReference type="KEGG" id="vg:2546398"/>
<dbReference type="KEGG" id="vg:2546406"/>
<dbReference type="Proteomes" id="UP000005893">
    <property type="component" value="Segment"/>
</dbReference>
<dbReference type="GO" id="GO:0005524">
    <property type="term" value="F:ATP binding"/>
    <property type="evidence" value="ECO:0007669"/>
    <property type="project" value="UniProtKB-KW"/>
</dbReference>
<dbReference type="GO" id="GO:0003677">
    <property type="term" value="F:DNA binding"/>
    <property type="evidence" value="ECO:0007669"/>
    <property type="project" value="UniProtKB-KW"/>
</dbReference>
<dbReference type="GO" id="GO:0003910">
    <property type="term" value="F:DNA ligase (ATP) activity"/>
    <property type="evidence" value="ECO:0007669"/>
    <property type="project" value="UniProtKB-EC"/>
</dbReference>
<dbReference type="GO" id="GO:0004519">
    <property type="term" value="F:endonuclease activity"/>
    <property type="evidence" value="ECO:0007669"/>
    <property type="project" value="UniProtKB-KW"/>
</dbReference>
<dbReference type="GO" id="GO:0008270">
    <property type="term" value="F:zinc ion binding"/>
    <property type="evidence" value="ECO:0007669"/>
    <property type="project" value="UniProtKB-KW"/>
</dbReference>
<dbReference type="GO" id="GO:0006260">
    <property type="term" value="P:DNA replication"/>
    <property type="evidence" value="ECO:0007669"/>
    <property type="project" value="UniProtKB-KW"/>
</dbReference>
<dbReference type="GO" id="GO:0039684">
    <property type="term" value="P:rolling circle single-stranded viral DNA replication"/>
    <property type="evidence" value="ECO:0000314"/>
    <property type="project" value="UniProtKB"/>
</dbReference>
<dbReference type="InterPro" id="IPR008766">
    <property type="entry name" value="Replication_gene_A-like"/>
</dbReference>
<dbReference type="Pfam" id="PF05840">
    <property type="entry name" value="Phage_GPA"/>
    <property type="match status" value="1"/>
</dbReference>
<feature type="chain" id="PRO_0000003317" description="Replication-associated protein A">
    <location>
        <begin position="1"/>
        <end position="513"/>
    </location>
</feature>
<feature type="zinc finger region" evidence="1">
    <location>
        <begin position="246"/>
        <end position="268"/>
    </location>
</feature>
<feature type="active site" description="O-(5'-phospho-DNA)-tyrosine intermediate" evidence="2">
    <location>
        <position position="343"/>
    </location>
</feature>
<feature type="active site" description="O-(5'-phospho-DNA)-tyrosine intermediate" evidence="2">
    <location>
        <position position="347"/>
    </location>
</feature>
<feature type="splice variant" id="VSP_018674" description="In isoform A*." evidence="4">
    <location>
        <begin position="1"/>
        <end position="172"/>
    </location>
</feature>
<feature type="mutagenesis site" description="Completely abolishes phage viability." evidence="3">
    <original>Y</original>
    <variation>F</variation>
    <location>
        <position position="343"/>
    </location>
</feature>
<feature type="mutagenesis site" description="Completely abolishes phage viability." evidence="3">
    <original>Y</original>
    <variation>F</variation>
    <location>
        <position position="347"/>
    </location>
</feature>
<proteinExistence type="evidence at protein level"/>
<keyword id="KW-0024">Alternative initiation</keyword>
<keyword id="KW-0067">ATP-binding</keyword>
<keyword id="KW-0235">DNA replication</keyword>
<keyword id="KW-0238">DNA-binding</keyword>
<keyword id="KW-0255">Endonuclease</keyword>
<keyword id="KW-0378">Hydrolase</keyword>
<keyword id="KW-0436">Ligase</keyword>
<keyword id="KW-0479">Metal-binding</keyword>
<keyword id="KW-0540">Nuclease</keyword>
<keyword id="KW-0547">Nucleotide-binding</keyword>
<keyword id="KW-1185">Reference proteome</keyword>
<keyword id="KW-1194">Viral DNA replication</keyword>
<keyword id="KW-0862">Zinc</keyword>
<keyword id="KW-0863">Zinc-finger</keyword>
<name>REPA_BPPHS</name>
<accession>P03631</accession>